<accession>Q6BTZ6</accession>
<gene>
    <name evidence="1" type="primary">NBP35</name>
    <name type="ordered locus">DEHA2C14718g</name>
</gene>
<comment type="function">
    <text evidence="1">Component of the cytosolic iron-sulfur (Fe/S) protein assembly (CIA) machinery. Required for maturation of extramitochondrial Fe-S proteins. The NBP35-CFD1 heterotetramer forms a Fe-S scaffold complex, mediating the de novo assembly of an Fe-S cluster and its transfer to target apoproteins. Required for biogenesis and export of both ribosomal subunits, which may reflect a role in assembly of the Fe/S clusters in RLI1, a protein which performs rRNA processing and ribosome export.</text>
</comment>
<comment type="cofactor">
    <cofactor evidence="1">
        <name>[4Fe-4S] cluster</name>
        <dbReference type="ChEBI" id="CHEBI:49883"/>
    </cofactor>
    <text evidence="1">Binds 4 [4Fe-4S] clusters per heterotetramer. Contains two stable clusters in the N-termini of NBP35 and two labile, bridging clusters between subunits of the NBP35-CFD1 heterotetramer.</text>
</comment>
<comment type="subunit">
    <text evidence="1">Heterotetramer of 2 NBP35 and 2 CFD1 chains.</text>
</comment>
<comment type="subcellular location">
    <subcellularLocation>
        <location evidence="1">Cytoplasm</location>
    </subcellularLocation>
    <subcellularLocation>
        <location evidence="1">Nucleus</location>
    </subcellularLocation>
</comment>
<comment type="similarity">
    <text evidence="1">Belongs to the Mrp/NBP35 ATP-binding proteins family. NUBP1/NBP35 subfamily.</text>
</comment>
<keyword id="KW-0004">4Fe-4S</keyword>
<keyword id="KW-0067">ATP-binding</keyword>
<keyword id="KW-0963">Cytoplasm</keyword>
<keyword id="KW-0408">Iron</keyword>
<keyword id="KW-0411">Iron-sulfur</keyword>
<keyword id="KW-0479">Metal-binding</keyword>
<keyword id="KW-0547">Nucleotide-binding</keyword>
<keyword id="KW-0539">Nucleus</keyword>
<keyword id="KW-1185">Reference proteome</keyword>
<reference key="1">
    <citation type="journal article" date="2004" name="Nature">
        <title>Genome evolution in yeasts.</title>
        <authorList>
            <person name="Dujon B."/>
            <person name="Sherman D."/>
            <person name="Fischer G."/>
            <person name="Durrens P."/>
            <person name="Casaregola S."/>
            <person name="Lafontaine I."/>
            <person name="de Montigny J."/>
            <person name="Marck C."/>
            <person name="Neuveglise C."/>
            <person name="Talla E."/>
            <person name="Goffard N."/>
            <person name="Frangeul L."/>
            <person name="Aigle M."/>
            <person name="Anthouard V."/>
            <person name="Babour A."/>
            <person name="Barbe V."/>
            <person name="Barnay S."/>
            <person name="Blanchin S."/>
            <person name="Beckerich J.-M."/>
            <person name="Beyne E."/>
            <person name="Bleykasten C."/>
            <person name="Boisrame A."/>
            <person name="Boyer J."/>
            <person name="Cattolico L."/>
            <person name="Confanioleri F."/>
            <person name="de Daruvar A."/>
            <person name="Despons L."/>
            <person name="Fabre E."/>
            <person name="Fairhead C."/>
            <person name="Ferry-Dumazet H."/>
            <person name="Groppi A."/>
            <person name="Hantraye F."/>
            <person name="Hennequin C."/>
            <person name="Jauniaux N."/>
            <person name="Joyet P."/>
            <person name="Kachouri R."/>
            <person name="Kerrest A."/>
            <person name="Koszul R."/>
            <person name="Lemaire M."/>
            <person name="Lesur I."/>
            <person name="Ma L."/>
            <person name="Muller H."/>
            <person name="Nicaud J.-M."/>
            <person name="Nikolski M."/>
            <person name="Oztas S."/>
            <person name="Ozier-Kalogeropoulos O."/>
            <person name="Pellenz S."/>
            <person name="Potier S."/>
            <person name="Richard G.-F."/>
            <person name="Straub M.-L."/>
            <person name="Suleau A."/>
            <person name="Swennen D."/>
            <person name="Tekaia F."/>
            <person name="Wesolowski-Louvel M."/>
            <person name="Westhof E."/>
            <person name="Wirth B."/>
            <person name="Zeniou-Meyer M."/>
            <person name="Zivanovic Y."/>
            <person name="Bolotin-Fukuhara M."/>
            <person name="Thierry A."/>
            <person name="Bouchier C."/>
            <person name="Caudron B."/>
            <person name="Scarpelli C."/>
            <person name="Gaillardin C."/>
            <person name="Weissenbach J."/>
            <person name="Wincker P."/>
            <person name="Souciet J.-L."/>
        </authorList>
    </citation>
    <scope>NUCLEOTIDE SEQUENCE [LARGE SCALE GENOMIC DNA]</scope>
    <source>
        <strain>ATCC 36239 / CBS 767 / BCRC 21394 / JCM 1990 / NBRC 0083 / IGC 2968</strain>
    </source>
</reference>
<feature type="chain" id="PRO_0000278896" description="Cytosolic Fe-S cluster assembly factor NBP35">
    <location>
        <begin position="1"/>
        <end position="329"/>
    </location>
</feature>
<feature type="region of interest" description="Disordered" evidence="2">
    <location>
        <begin position="1"/>
        <end position="33"/>
    </location>
</feature>
<feature type="compositionally biased region" description="Basic and acidic residues" evidence="2">
    <location>
        <begin position="8"/>
        <end position="18"/>
    </location>
</feature>
<feature type="binding site" evidence="1">
    <location>
        <position position="20"/>
    </location>
    <ligand>
        <name>[4Fe-4S] cluster</name>
        <dbReference type="ChEBI" id="CHEBI:49883"/>
        <label>1</label>
    </ligand>
</feature>
<feature type="binding site" evidence="1">
    <location>
        <position position="34"/>
    </location>
    <ligand>
        <name>[4Fe-4S] cluster</name>
        <dbReference type="ChEBI" id="CHEBI:49883"/>
        <label>1</label>
    </ligand>
</feature>
<feature type="binding site" evidence="1">
    <location>
        <position position="37"/>
    </location>
    <ligand>
        <name>[4Fe-4S] cluster</name>
        <dbReference type="ChEBI" id="CHEBI:49883"/>
        <label>1</label>
    </ligand>
</feature>
<feature type="binding site" evidence="1">
    <location>
        <position position="43"/>
    </location>
    <ligand>
        <name>[4Fe-4S] cluster</name>
        <dbReference type="ChEBI" id="CHEBI:49883"/>
        <label>1</label>
    </ligand>
</feature>
<feature type="binding site" evidence="1">
    <location>
        <begin position="74"/>
        <end position="81"/>
    </location>
    <ligand>
        <name>ATP</name>
        <dbReference type="ChEBI" id="CHEBI:30616"/>
    </ligand>
</feature>
<feature type="binding site" evidence="1">
    <location>
        <position position="248"/>
    </location>
    <ligand>
        <name>[4Fe-4S] cluster</name>
        <dbReference type="ChEBI" id="CHEBI:49883"/>
        <label>2</label>
        <note>ligand shared with heterodimeric partner</note>
    </ligand>
</feature>
<feature type="binding site" evidence="1">
    <location>
        <position position="251"/>
    </location>
    <ligand>
        <name>[4Fe-4S] cluster</name>
        <dbReference type="ChEBI" id="CHEBI:49883"/>
        <label>2</label>
        <note>ligand shared with heterodimeric partner</note>
    </ligand>
</feature>
<organism>
    <name type="scientific">Debaryomyces hansenii (strain ATCC 36239 / CBS 767 / BCRC 21394 / JCM 1990 / NBRC 0083 / IGC 2968)</name>
    <name type="common">Yeast</name>
    <name type="synonym">Torulaspora hansenii</name>
    <dbReference type="NCBI Taxonomy" id="284592"/>
    <lineage>
        <taxon>Eukaryota</taxon>
        <taxon>Fungi</taxon>
        <taxon>Dikarya</taxon>
        <taxon>Ascomycota</taxon>
        <taxon>Saccharomycotina</taxon>
        <taxon>Pichiomycetes</taxon>
        <taxon>Debaryomycetaceae</taxon>
        <taxon>Debaryomyces</taxon>
    </lineage>
</organism>
<dbReference type="EMBL" id="CR382135">
    <property type="protein sequence ID" value="CAG86403.1"/>
    <property type="molecule type" value="Genomic_DNA"/>
</dbReference>
<dbReference type="RefSeq" id="XP_458323.1">
    <property type="nucleotide sequence ID" value="XM_458323.1"/>
</dbReference>
<dbReference type="SMR" id="Q6BTZ6"/>
<dbReference type="FunCoup" id="Q6BTZ6">
    <property type="interactions" value="604"/>
</dbReference>
<dbReference type="STRING" id="284592.Q6BTZ6"/>
<dbReference type="GeneID" id="2900325"/>
<dbReference type="KEGG" id="dha:DEHA2C14718g"/>
<dbReference type="VEuPathDB" id="FungiDB:DEHA2C14718g"/>
<dbReference type="eggNOG" id="KOG3022">
    <property type="taxonomic scope" value="Eukaryota"/>
</dbReference>
<dbReference type="HOGENOM" id="CLU_024839_0_1_1"/>
<dbReference type="InParanoid" id="Q6BTZ6"/>
<dbReference type="OMA" id="VSGCPMR"/>
<dbReference type="OrthoDB" id="1741334at2759"/>
<dbReference type="Proteomes" id="UP000000599">
    <property type="component" value="Chromosome C"/>
</dbReference>
<dbReference type="GO" id="GO:1904564">
    <property type="term" value="C:cytosolic [4Fe-4S] assembly scaffold complex"/>
    <property type="evidence" value="ECO:0007669"/>
    <property type="project" value="EnsemblFungi"/>
</dbReference>
<dbReference type="GO" id="GO:0005634">
    <property type="term" value="C:nucleus"/>
    <property type="evidence" value="ECO:0007669"/>
    <property type="project" value="UniProtKB-SubCell"/>
</dbReference>
<dbReference type="GO" id="GO:0051539">
    <property type="term" value="F:4 iron, 4 sulfur cluster binding"/>
    <property type="evidence" value="ECO:0007669"/>
    <property type="project" value="UniProtKB-UniRule"/>
</dbReference>
<dbReference type="GO" id="GO:0005524">
    <property type="term" value="F:ATP binding"/>
    <property type="evidence" value="ECO:0007669"/>
    <property type="project" value="UniProtKB-KW"/>
</dbReference>
<dbReference type="GO" id="GO:0016887">
    <property type="term" value="F:ATP hydrolysis activity"/>
    <property type="evidence" value="ECO:0007669"/>
    <property type="project" value="EnsemblFungi"/>
</dbReference>
<dbReference type="GO" id="GO:0140663">
    <property type="term" value="F:ATP-dependent FeS chaperone activity"/>
    <property type="evidence" value="ECO:0007669"/>
    <property type="project" value="InterPro"/>
</dbReference>
<dbReference type="GO" id="GO:0005506">
    <property type="term" value="F:iron ion binding"/>
    <property type="evidence" value="ECO:0007669"/>
    <property type="project" value="EnsemblFungi"/>
</dbReference>
<dbReference type="GO" id="GO:0016226">
    <property type="term" value="P:iron-sulfur cluster assembly"/>
    <property type="evidence" value="ECO:0007669"/>
    <property type="project" value="UniProtKB-UniRule"/>
</dbReference>
<dbReference type="GO" id="GO:0002098">
    <property type="term" value="P:tRNA wobble uridine modification"/>
    <property type="evidence" value="ECO:0007669"/>
    <property type="project" value="EnsemblFungi"/>
</dbReference>
<dbReference type="CDD" id="cd02037">
    <property type="entry name" value="Mrp_NBP35"/>
    <property type="match status" value="1"/>
</dbReference>
<dbReference type="FunFam" id="3.40.50.300:FF:000427">
    <property type="entry name" value="Cytosolic Fe-S cluster assembly factor NUBP1"/>
    <property type="match status" value="1"/>
</dbReference>
<dbReference type="Gene3D" id="3.40.50.300">
    <property type="entry name" value="P-loop containing nucleotide triphosphate hydrolases"/>
    <property type="match status" value="1"/>
</dbReference>
<dbReference type="HAMAP" id="MF_02040">
    <property type="entry name" value="Mrp_NBP35"/>
    <property type="match status" value="1"/>
</dbReference>
<dbReference type="HAMAP" id="MF_03038">
    <property type="entry name" value="NUBP1"/>
    <property type="match status" value="1"/>
</dbReference>
<dbReference type="InterPro" id="IPR019591">
    <property type="entry name" value="Mrp/NBP35_ATP-bd"/>
</dbReference>
<dbReference type="InterPro" id="IPR028601">
    <property type="entry name" value="NUBP1/Nbp35"/>
</dbReference>
<dbReference type="InterPro" id="IPR027417">
    <property type="entry name" value="P-loop_NTPase"/>
</dbReference>
<dbReference type="InterPro" id="IPR033756">
    <property type="entry name" value="YlxH/NBP35"/>
</dbReference>
<dbReference type="PANTHER" id="PTHR23264:SF35">
    <property type="entry name" value="CYTOSOLIC FE-S CLUSTER ASSEMBLY FACTOR NUBP1"/>
    <property type="match status" value="1"/>
</dbReference>
<dbReference type="PANTHER" id="PTHR23264">
    <property type="entry name" value="NUCLEOTIDE-BINDING PROTEIN NBP35 YEAST -RELATED"/>
    <property type="match status" value="1"/>
</dbReference>
<dbReference type="Pfam" id="PF10609">
    <property type="entry name" value="ParA"/>
    <property type="match status" value="1"/>
</dbReference>
<dbReference type="SUPFAM" id="SSF52540">
    <property type="entry name" value="P-loop containing nucleoside triphosphate hydrolases"/>
    <property type="match status" value="1"/>
</dbReference>
<protein>
    <recommendedName>
        <fullName evidence="1">Cytosolic Fe-S cluster assembly factor NBP35</fullName>
    </recommendedName>
    <alternativeName>
        <fullName evidence="1">Nucleotide-binding protein 35</fullName>
    </alternativeName>
</protein>
<proteinExistence type="inferred from homology"/>
<name>NBP35_DEBHA</name>
<evidence type="ECO:0000255" key="1">
    <source>
        <dbReference type="HAMAP-Rule" id="MF_03038"/>
    </source>
</evidence>
<evidence type="ECO:0000256" key="2">
    <source>
        <dbReference type="SAM" id="MobiDB-lite"/>
    </source>
</evidence>
<sequence>MAPSQVEDISKTELETPEHCPGPESEQAGKEDACNGCPNQSICSSQLPQGPDPDLPLINKRLSQIDHKILVLSGKGGVGKSTFTSMLSWALAADEDIEVGAMDLDICGPSLPRMLGAEGESIHQSNSGWSPVYVADNLGLMSISFMLPDADSAVIWRGAKKNGLIKQFLKDVNWGEHLDYLVVDTPPGTSDEHLSVTTYMKEVGIDGALIVTTPQEVALLDVRKEIDFCRKANIKILGLVENMSGFVCPNCKGESQIFRPTTGGGKKLCEDLKLPYLGAVPLDPRIGKACDAGESFFDSYADSPASSAILDVVDALRDQIEISLEKLNI</sequence>